<dbReference type="EC" id="7.1.2.2" evidence="1"/>
<dbReference type="EMBL" id="CP001131">
    <property type="protein sequence ID" value="ACG75688.1"/>
    <property type="molecule type" value="Genomic_DNA"/>
</dbReference>
<dbReference type="RefSeq" id="WP_012528431.1">
    <property type="nucleotide sequence ID" value="NC_011145.1"/>
</dbReference>
<dbReference type="SMR" id="B4UKF2"/>
<dbReference type="KEGG" id="ank:AnaeK_4486"/>
<dbReference type="HOGENOM" id="CLU_010091_2_1_7"/>
<dbReference type="OrthoDB" id="9803053at2"/>
<dbReference type="Proteomes" id="UP000001871">
    <property type="component" value="Chromosome"/>
</dbReference>
<dbReference type="GO" id="GO:0005886">
    <property type="term" value="C:plasma membrane"/>
    <property type="evidence" value="ECO:0007669"/>
    <property type="project" value="UniProtKB-SubCell"/>
</dbReference>
<dbReference type="GO" id="GO:0045259">
    <property type="term" value="C:proton-transporting ATP synthase complex"/>
    <property type="evidence" value="ECO:0007669"/>
    <property type="project" value="UniProtKB-KW"/>
</dbReference>
<dbReference type="GO" id="GO:0043531">
    <property type="term" value="F:ADP binding"/>
    <property type="evidence" value="ECO:0007669"/>
    <property type="project" value="TreeGrafter"/>
</dbReference>
<dbReference type="GO" id="GO:0005524">
    <property type="term" value="F:ATP binding"/>
    <property type="evidence" value="ECO:0007669"/>
    <property type="project" value="UniProtKB-UniRule"/>
</dbReference>
<dbReference type="GO" id="GO:0046933">
    <property type="term" value="F:proton-transporting ATP synthase activity, rotational mechanism"/>
    <property type="evidence" value="ECO:0007669"/>
    <property type="project" value="UniProtKB-UniRule"/>
</dbReference>
<dbReference type="CDD" id="cd18113">
    <property type="entry name" value="ATP-synt_F1_alpha_C"/>
    <property type="match status" value="1"/>
</dbReference>
<dbReference type="CDD" id="cd18116">
    <property type="entry name" value="ATP-synt_F1_alpha_N"/>
    <property type="match status" value="1"/>
</dbReference>
<dbReference type="CDD" id="cd01132">
    <property type="entry name" value="F1-ATPase_alpha_CD"/>
    <property type="match status" value="1"/>
</dbReference>
<dbReference type="FunFam" id="1.20.150.20:FF:000001">
    <property type="entry name" value="ATP synthase subunit alpha"/>
    <property type="match status" value="1"/>
</dbReference>
<dbReference type="FunFam" id="2.40.30.20:FF:000001">
    <property type="entry name" value="ATP synthase subunit alpha"/>
    <property type="match status" value="1"/>
</dbReference>
<dbReference type="FunFam" id="3.40.50.300:FF:000002">
    <property type="entry name" value="ATP synthase subunit alpha"/>
    <property type="match status" value="1"/>
</dbReference>
<dbReference type="Gene3D" id="2.40.30.20">
    <property type="match status" value="1"/>
</dbReference>
<dbReference type="Gene3D" id="1.20.150.20">
    <property type="entry name" value="ATP synthase alpha/beta chain, C-terminal domain"/>
    <property type="match status" value="1"/>
</dbReference>
<dbReference type="Gene3D" id="3.40.50.300">
    <property type="entry name" value="P-loop containing nucleotide triphosphate hydrolases"/>
    <property type="match status" value="1"/>
</dbReference>
<dbReference type="HAMAP" id="MF_01346">
    <property type="entry name" value="ATP_synth_alpha_bact"/>
    <property type="match status" value="1"/>
</dbReference>
<dbReference type="InterPro" id="IPR023366">
    <property type="entry name" value="ATP_synth_asu-like_sf"/>
</dbReference>
<dbReference type="InterPro" id="IPR000793">
    <property type="entry name" value="ATP_synth_asu_C"/>
</dbReference>
<dbReference type="InterPro" id="IPR038376">
    <property type="entry name" value="ATP_synth_asu_C_sf"/>
</dbReference>
<dbReference type="InterPro" id="IPR033732">
    <property type="entry name" value="ATP_synth_F1_a_nt-bd_dom"/>
</dbReference>
<dbReference type="InterPro" id="IPR005294">
    <property type="entry name" value="ATP_synth_F1_asu"/>
</dbReference>
<dbReference type="InterPro" id="IPR020003">
    <property type="entry name" value="ATPase_a/bsu_AS"/>
</dbReference>
<dbReference type="InterPro" id="IPR004100">
    <property type="entry name" value="ATPase_F1/V1/A1_a/bsu_N"/>
</dbReference>
<dbReference type="InterPro" id="IPR036121">
    <property type="entry name" value="ATPase_F1/V1/A1_a/bsu_N_sf"/>
</dbReference>
<dbReference type="InterPro" id="IPR000194">
    <property type="entry name" value="ATPase_F1/V1/A1_a/bsu_nucl-bd"/>
</dbReference>
<dbReference type="InterPro" id="IPR027417">
    <property type="entry name" value="P-loop_NTPase"/>
</dbReference>
<dbReference type="NCBIfam" id="TIGR00962">
    <property type="entry name" value="atpA"/>
    <property type="match status" value="1"/>
</dbReference>
<dbReference type="NCBIfam" id="NF009884">
    <property type="entry name" value="PRK13343.1"/>
    <property type="match status" value="1"/>
</dbReference>
<dbReference type="PANTHER" id="PTHR48082">
    <property type="entry name" value="ATP SYNTHASE SUBUNIT ALPHA, MITOCHONDRIAL"/>
    <property type="match status" value="1"/>
</dbReference>
<dbReference type="PANTHER" id="PTHR48082:SF2">
    <property type="entry name" value="ATP SYNTHASE SUBUNIT ALPHA, MITOCHONDRIAL"/>
    <property type="match status" value="1"/>
</dbReference>
<dbReference type="Pfam" id="PF00006">
    <property type="entry name" value="ATP-synt_ab"/>
    <property type="match status" value="1"/>
</dbReference>
<dbReference type="Pfam" id="PF00306">
    <property type="entry name" value="ATP-synt_ab_C"/>
    <property type="match status" value="1"/>
</dbReference>
<dbReference type="Pfam" id="PF02874">
    <property type="entry name" value="ATP-synt_ab_N"/>
    <property type="match status" value="1"/>
</dbReference>
<dbReference type="PIRSF" id="PIRSF039088">
    <property type="entry name" value="F_ATPase_subunit_alpha"/>
    <property type="match status" value="1"/>
</dbReference>
<dbReference type="SUPFAM" id="SSF47917">
    <property type="entry name" value="C-terminal domain of alpha and beta subunits of F1 ATP synthase"/>
    <property type="match status" value="1"/>
</dbReference>
<dbReference type="SUPFAM" id="SSF50615">
    <property type="entry name" value="N-terminal domain of alpha and beta subunits of F1 ATP synthase"/>
    <property type="match status" value="1"/>
</dbReference>
<dbReference type="SUPFAM" id="SSF52540">
    <property type="entry name" value="P-loop containing nucleoside triphosphate hydrolases"/>
    <property type="match status" value="1"/>
</dbReference>
<dbReference type="PROSITE" id="PS00152">
    <property type="entry name" value="ATPASE_ALPHA_BETA"/>
    <property type="match status" value="1"/>
</dbReference>
<reference key="1">
    <citation type="submission" date="2008-08" db="EMBL/GenBank/DDBJ databases">
        <title>Complete sequence of Anaeromyxobacter sp. K.</title>
        <authorList>
            <consortium name="US DOE Joint Genome Institute"/>
            <person name="Lucas S."/>
            <person name="Copeland A."/>
            <person name="Lapidus A."/>
            <person name="Glavina del Rio T."/>
            <person name="Dalin E."/>
            <person name="Tice H."/>
            <person name="Bruce D."/>
            <person name="Goodwin L."/>
            <person name="Pitluck S."/>
            <person name="Saunders E."/>
            <person name="Brettin T."/>
            <person name="Detter J.C."/>
            <person name="Han C."/>
            <person name="Larimer F."/>
            <person name="Land M."/>
            <person name="Hauser L."/>
            <person name="Kyrpides N."/>
            <person name="Ovchinnikiva G."/>
            <person name="Beliaev A."/>
        </authorList>
    </citation>
    <scope>NUCLEOTIDE SEQUENCE [LARGE SCALE GENOMIC DNA]</scope>
    <source>
        <strain>K</strain>
    </source>
</reference>
<protein>
    <recommendedName>
        <fullName evidence="1">ATP synthase subunit alpha</fullName>
        <ecNumber evidence="1">7.1.2.2</ecNumber>
    </recommendedName>
    <alternativeName>
        <fullName evidence="1">ATP synthase F1 sector subunit alpha</fullName>
    </alternativeName>
    <alternativeName>
        <fullName evidence="1">F-ATPase subunit alpha</fullName>
    </alternativeName>
</protein>
<keyword id="KW-0066">ATP synthesis</keyword>
<keyword id="KW-0067">ATP-binding</keyword>
<keyword id="KW-0997">Cell inner membrane</keyword>
<keyword id="KW-1003">Cell membrane</keyword>
<keyword id="KW-0139">CF(1)</keyword>
<keyword id="KW-0375">Hydrogen ion transport</keyword>
<keyword id="KW-0406">Ion transport</keyword>
<keyword id="KW-0472">Membrane</keyword>
<keyword id="KW-0547">Nucleotide-binding</keyword>
<keyword id="KW-1278">Translocase</keyword>
<keyword id="KW-0813">Transport</keyword>
<evidence type="ECO:0000255" key="1">
    <source>
        <dbReference type="HAMAP-Rule" id="MF_01346"/>
    </source>
</evidence>
<comment type="function">
    <text evidence="1">Produces ATP from ADP in the presence of a proton gradient across the membrane. The alpha chain is a regulatory subunit.</text>
</comment>
<comment type="catalytic activity">
    <reaction evidence="1">
        <text>ATP + H2O + 4 H(+)(in) = ADP + phosphate + 5 H(+)(out)</text>
        <dbReference type="Rhea" id="RHEA:57720"/>
        <dbReference type="ChEBI" id="CHEBI:15377"/>
        <dbReference type="ChEBI" id="CHEBI:15378"/>
        <dbReference type="ChEBI" id="CHEBI:30616"/>
        <dbReference type="ChEBI" id="CHEBI:43474"/>
        <dbReference type="ChEBI" id="CHEBI:456216"/>
        <dbReference type="EC" id="7.1.2.2"/>
    </reaction>
</comment>
<comment type="subunit">
    <text evidence="1">F-type ATPases have 2 components, CF(1) - the catalytic core - and CF(0) - the membrane proton channel. CF(1) has five subunits: alpha(3), beta(3), gamma(1), delta(1), epsilon(1). CF(0) has three main subunits: a(1), b(2) and c(9-12). The alpha and beta chains form an alternating ring which encloses part of the gamma chain. CF(1) is attached to CF(0) by a central stalk formed by the gamma and epsilon chains, while a peripheral stalk is formed by the delta and b chains.</text>
</comment>
<comment type="subcellular location">
    <subcellularLocation>
        <location evidence="1">Cell inner membrane</location>
        <topology evidence="1">Peripheral membrane protein</topology>
    </subcellularLocation>
</comment>
<comment type="similarity">
    <text evidence="1">Belongs to the ATPase alpha/beta chains family.</text>
</comment>
<organism>
    <name type="scientific">Anaeromyxobacter sp. (strain K)</name>
    <dbReference type="NCBI Taxonomy" id="447217"/>
    <lineage>
        <taxon>Bacteria</taxon>
        <taxon>Pseudomonadati</taxon>
        <taxon>Myxococcota</taxon>
        <taxon>Myxococcia</taxon>
        <taxon>Myxococcales</taxon>
        <taxon>Cystobacterineae</taxon>
        <taxon>Anaeromyxobacteraceae</taxon>
        <taxon>Anaeromyxobacter</taxon>
    </lineage>
</organism>
<sequence>MEIRADEISRIIREQIKDYGKKVEVAETGSILSQADGVARIYGLAGAAAGELLEFPGGVRGLVLNLEEDNVGAAIMGPYEHIREGDPVKRTGLIAEVPVGEELLGRVVDGLGNPIDGRGPLNAKHHRKIEIKAPGIVKRKSVHEPMQTGLKAIDALVPIGRGQRELILGDRQTGKTAVAIDTILNNKGNNLYCFYVAIGQKQSTVARVVDTLKKYGAMEYTTVISASASDPAPMQYLAPYTGVTMAEYFRDSGRHALIIYDDLSKQAVAYRQLSLLLRRPPGREAYPGDVFYLHSRLLERAAKLSDKEGAGSLTALPIIETQAGDVSAYIPTNVISITDGQIFLESNLFYQGVRPAINVGISVSRVGGSAQIKAMKQVAGSLKLDLAQYRELAAFAQFGSDLDKATQETLARGERLVELLKQGQYAPLPVEKQVIQIYAGTQKDTDGQNWIRAVPTEQVVRYMRELIEFLDARHPGIAKAIAEKKALDDGIRKDLDAALREFAGIFKIEG</sequence>
<accession>B4UKF2</accession>
<feature type="chain" id="PRO_1000143339" description="ATP synthase subunit alpha">
    <location>
        <begin position="1"/>
        <end position="510"/>
    </location>
</feature>
<feature type="binding site" evidence="1">
    <location>
        <begin position="169"/>
        <end position="176"/>
    </location>
    <ligand>
        <name>ATP</name>
        <dbReference type="ChEBI" id="CHEBI:30616"/>
    </ligand>
</feature>
<feature type="site" description="Required for activity" evidence="1">
    <location>
        <position position="362"/>
    </location>
</feature>
<proteinExistence type="inferred from homology"/>
<gene>
    <name evidence="1" type="primary">atpA</name>
    <name type="ordered locus">AnaeK_4486</name>
</gene>
<name>ATPA_ANASK</name>